<name>GG_PSHV1</name>
<protein>
    <recommendedName>
        <fullName>Glycoprotein G</fullName>
    </recommendedName>
</protein>
<reference key="1">
    <citation type="journal article" date="2006" name="J. Virol.">
        <title>Psittacid herpesvirus 1 and infectious laryngotracheitis virus: Comparative genome sequence analysis of two avian alphaherpesviruses.</title>
        <authorList>
            <person name="Thureen D.R."/>
            <person name="Keeler C.L. Jr."/>
        </authorList>
    </citation>
    <scope>NUCLEOTIDE SEQUENCE [LARGE SCALE GENOMIC DNA]</scope>
</reference>
<gene>
    <name type="primary">gG</name>
    <name type="ORF">US4</name>
</gene>
<keyword id="KW-0325">Glycoprotein</keyword>
<keyword id="KW-1185">Reference proteome</keyword>
<keyword id="KW-0732">Signal</keyword>
<accession>Q6UDF8</accession>
<evidence type="ECO:0000255" key="1"/>
<evidence type="ECO:0000256" key="2">
    <source>
        <dbReference type="SAM" id="MobiDB-lite"/>
    </source>
</evidence>
<evidence type="ECO:0000305" key="3"/>
<proteinExistence type="inferred from homology"/>
<sequence>MGHSGENVLCVALLAIYLAAGGAAKPVMPERRGYAPPFTAAPSTLGTVDVTACGGITLPTKVDFRGSGGVQVIVRWFFGAPIDDNTTDLCWVPLHSYQADGCHFPADDDFNISTCCAHGTLFVSPDSDYSSYLTGNGDLRVYPGTMDAGIYAFYVRIGDDHFVGAWDLRVKHSKYCHGDYGMKVQVQSLPESSEERVVATDSDSGSCEDDEKEEKSDCEFPEIAVPQTWSKVCTATWGEHGSRLFVWPACLGTHQESIEGAHTAMPVLYYGSKPIASEQK</sequence>
<dbReference type="EMBL" id="AY372243">
    <property type="protein sequence ID" value="AAQ73752.1"/>
    <property type="molecule type" value="Genomic_DNA"/>
</dbReference>
<dbReference type="RefSeq" id="NP_944446.1">
    <property type="nucleotide sequence ID" value="NC_005264.1"/>
</dbReference>
<dbReference type="GlyCosmos" id="Q6UDF8">
    <property type="glycosylation" value="2 sites, No reported glycans"/>
</dbReference>
<dbReference type="GeneID" id="2656980"/>
<dbReference type="KEGG" id="vg:2656980"/>
<dbReference type="Proteomes" id="UP000006840">
    <property type="component" value="Segment"/>
</dbReference>
<dbReference type="InterPro" id="IPR036179">
    <property type="entry name" value="Ig-like_dom_sf"/>
</dbReference>
<dbReference type="SUPFAM" id="SSF48726">
    <property type="entry name" value="Immunoglobulin"/>
    <property type="match status" value="1"/>
</dbReference>
<comment type="miscellaneous">
    <text>The PsHV-1 glycoprotein G does not seem to possess a transmembrane like the other family members.</text>
</comment>
<comment type="similarity">
    <text evidence="3">Belongs to the alphaherpesvirinae glycoprotein G family.</text>
</comment>
<organism>
    <name type="scientific">Psittacid herpesvirus 1 (isolate Amazon parrot/-/97-0001/1997)</name>
    <name type="common">PsHV-1</name>
    <name type="synonym">Pacheco's disease virus</name>
    <dbReference type="NCBI Taxonomy" id="670426"/>
    <lineage>
        <taxon>Viruses</taxon>
        <taxon>Duplodnaviria</taxon>
        <taxon>Heunggongvirae</taxon>
        <taxon>Peploviricota</taxon>
        <taxon>Herviviricetes</taxon>
        <taxon>Herpesvirales</taxon>
        <taxon>Orthoherpesviridae</taxon>
        <taxon>Alphaherpesvirinae</taxon>
        <taxon>Iltovirus</taxon>
        <taxon>Iltovirus psittacidalpha1</taxon>
        <taxon>Psittacid alphaherpesvirus 1</taxon>
    </lineage>
</organism>
<feature type="signal peptide" evidence="1">
    <location>
        <begin position="1"/>
        <end position="24"/>
    </location>
</feature>
<feature type="chain" id="PRO_0000406867" description="Glycoprotein G">
    <location>
        <begin position="25"/>
        <end position="280"/>
    </location>
</feature>
<feature type="region of interest" description="Disordered" evidence="2">
    <location>
        <begin position="191"/>
        <end position="218"/>
    </location>
</feature>
<feature type="glycosylation site" description="N-linked (GlcNAc...) asparagine; by host" evidence="1">
    <location>
        <position position="85"/>
    </location>
</feature>
<feature type="glycosylation site" description="N-linked (GlcNAc...) asparagine; by host" evidence="1">
    <location>
        <position position="111"/>
    </location>
</feature>
<organismHost>
    <name type="scientific">Amazona oratrix</name>
    <name type="common">yellow-headed parrot</name>
    <dbReference type="NCBI Taxonomy" id="152276"/>
</organismHost>